<feature type="chain" id="PRO_0000116194" description="Tyrosine protein kinase-interacting protein">
    <location>
        <begin position="1"/>
        <end position="265"/>
    </location>
</feature>
<feature type="topological domain" description="Cytoplasmic" evidence="2">
    <location>
        <begin position="1"/>
        <end position="238"/>
    </location>
</feature>
<feature type="transmembrane region" description="Helical" evidence="2">
    <location>
        <begin position="239"/>
        <end position="259"/>
    </location>
</feature>
<feature type="topological domain" description="Extracellular" evidence="2">
    <location>
        <begin position="260"/>
        <end position="265"/>
    </location>
</feature>
<feature type="region of interest" description="Disordered" evidence="3">
    <location>
        <begin position="1"/>
        <end position="49"/>
    </location>
</feature>
<feature type="region of interest" description="CSKH/LBD2" evidence="1">
    <location>
        <begin position="155"/>
        <end position="164"/>
    </location>
</feature>
<feature type="region of interest" description="Disordered" evidence="3">
    <location>
        <begin position="172"/>
        <end position="192"/>
    </location>
</feature>
<feature type="region of interest" description="SH3B/LBD1" evidence="1">
    <location>
        <begin position="183"/>
        <end position="192"/>
    </location>
</feature>
<feature type="region of interest" description="SH3 binding" evidence="1">
    <location>
        <begin position="225"/>
        <end position="234"/>
    </location>
</feature>
<feature type="compositionally biased region" description="Acidic residues" evidence="3">
    <location>
        <begin position="1"/>
        <end position="14"/>
    </location>
</feature>
<feature type="compositionally biased region" description="Basic and acidic residues" evidence="3">
    <location>
        <begin position="15"/>
        <end position="26"/>
    </location>
</feature>
<feature type="compositionally biased region" description="Low complexity" evidence="3">
    <location>
        <begin position="27"/>
        <end position="43"/>
    </location>
</feature>
<feature type="compositionally biased region" description="Pro residues" evidence="3">
    <location>
        <begin position="183"/>
        <end position="192"/>
    </location>
</feature>
<feature type="modified residue" description="Phosphotyrosine; by host LCK" evidence="1">
    <location>
        <position position="123"/>
    </location>
</feature>
<feature type="modified residue" description="Phosphotyrosine; by host" evidence="1">
    <location>
        <position position="136"/>
    </location>
</feature>
<accession>P88825</accession>
<organism>
    <name type="scientific">Saimiriine herpesvirus 2 (strain 484)</name>
    <name type="common">SaHV-2</name>
    <name type="synonym">Herpesvirus saimiri</name>
    <dbReference type="NCBI Taxonomy" id="353282"/>
    <lineage>
        <taxon>Viruses</taxon>
        <taxon>Duplodnaviria</taxon>
        <taxon>Heunggongvirae</taxon>
        <taxon>Peploviricota</taxon>
        <taxon>Herviviricetes</taxon>
        <taxon>Herpesvirales</taxon>
        <taxon>Orthoherpesviridae</taxon>
        <taxon>Gammaherpesvirinae</taxon>
        <taxon>Rhadinovirus</taxon>
        <taxon>Rhadinovirus saimiriinegamma2</taxon>
        <taxon>Saimiriine herpesvirus 2</taxon>
    </lineage>
</organism>
<reference key="1">
    <citation type="journal article" date="1997" name="J. Virol.">
        <title>Functional phenotype of transformed human alpha/beta and gamma/delta T cells determined by different subgroup C strains of herpesvirus saimiri.</title>
        <authorList>
            <person name="Fickenscher H."/>
            <person name="Bokel C."/>
            <person name="Knappe A."/>
            <person name="Biesinger B."/>
            <person name="Meinl E."/>
            <person name="Fleischer B."/>
            <person name="Fleckenstein B."/>
            <person name="Broker B.M."/>
        </authorList>
    </citation>
    <scope>NUCLEOTIDE SEQUENCE [GENOMIC DNA]</scope>
    <source>
        <strain>C484</strain>
    </source>
</reference>
<reference key="2">
    <citation type="journal article" date="2005" name="J. Cell. Physiol.">
        <title>Cell transformation by Herpesvirus saimiri.</title>
        <authorList>
            <person name="Tsygankov A.Y."/>
        </authorList>
    </citation>
    <scope>REVIEW</scope>
</reference>
<evidence type="ECO:0000250" key="1"/>
<evidence type="ECO:0000255" key="2"/>
<evidence type="ECO:0000256" key="3">
    <source>
        <dbReference type="SAM" id="MobiDB-lite"/>
    </source>
</evidence>
<proteinExistence type="evidence at protein level"/>
<keyword id="KW-1032">Host cell membrane</keyword>
<keyword id="KW-1043">Host membrane</keyword>
<keyword id="KW-0945">Host-virus interaction</keyword>
<keyword id="KW-0472">Membrane</keyword>
<keyword id="KW-0553">Oncogene</keyword>
<keyword id="KW-0597">Phosphoprotein</keyword>
<keyword id="KW-0729">SH3-binding</keyword>
<keyword id="KW-0812">Transmembrane</keyword>
<keyword id="KW-1133">Transmembrane helix</keyword>
<sequence>MANEGEEIELTEFPETEKERKDEEKLSSCSEETTDTSSSSSSDHVPAPIEVNVIIQNSSRTEDELQNSTKFAVANEGKEIELTGFQGKLSSCSEETTATSSSYSSKQASVCIEENGDNETSTYRPQNVLTNLNSLYTTFEDARAQGKGMVRYKSEDLQSFLEKYPPDYRKPKRDLSATWDPGMPTPALPPRPANLGERQASTVRLHVKESNCKQPRERKANERNIVKDLKRLENKVNAIICLVVVILAVLLLVTVLSILHIGMKS</sequence>
<protein>
    <recommendedName>
        <fullName>Tyrosine protein kinase-interacting protein</fullName>
        <shortName>Tip</shortName>
    </recommendedName>
    <alternativeName>
        <fullName>TipC484</fullName>
    </alternativeName>
</protein>
<name>TIP_SHV48</name>
<comment type="function">
    <text evidence="1">Plays a critical role in virus induced T-cell transformation. Binds to T-cell-specific tyrosine kinase LCK SH2 and SH3 domains, thereby activating its kinase activity. Once phosphorylated by host LCK, forms a complex with at least STAT 1 and 3, resulting on the phosphorylation of STAT3 and presumably STAT1, and their migration into the nucleus to induce transcription of target genes. Stimulates host ILF3/NF-AT-90 activity. Association with host NXF1/TAP transduces the signal up-regulating surface expression of adhesion molecules as well as activating NF-kappa-B activity. Acts synergistically with StpC to stimulate NF-kappa-B activity and interleukin-2 gene expression. Activation of NF-kappa-B protects lymphocytes from apoptosis, thereby facilitating viral induced cell transformation. May cause down-regulation of host LCK and cell apoptosis when stably overexpressed ex vivo. Interaction with WDR48 induce degradation of T-cell receptor in a lysosome-dependent fashion, when both proteins are overexpressed. The biological effect of this interaction remains controversial since no T-cell receptor degradation is observed in infected cells (By similarity).</text>
</comment>
<comment type="subunit">
    <text evidence="1">Binds host LCK, human WDR48 and human NXF1/TAP. Forms a complex with activated LCK and STAT1 and STAT3 (By similarity).</text>
</comment>
<comment type="subcellular location">
    <subcellularLocation>
        <location evidence="1">Host cell membrane</location>
        <topology evidence="1">Single-pass membrane protein</topology>
    </subcellularLocation>
</comment>
<comment type="domain">
    <text evidence="1">The SH3B/LBD1 (SH3-binding) region binds LCK SH3 domain and CSKH (C-terminal Src-related kinase homology) region binds the kinase domains of LCK. Both motif are required to activate LCK (By similarity).</text>
</comment>
<comment type="PTM">
    <text evidence="1">Phosphorylation on Tyr-123 acts as a docking site for the recruitment of STATs 1 and 3.</text>
</comment>
<comment type="biotechnology">
    <text>Used in cell biology research to transform T-cell lymphocytes. Saimiriine herpesvirus 2 transforms T-cell lymphocytes, including human, to continuous growth in vitro. 2 viral proteins, Tip and StpC, are essential for this function.</text>
</comment>
<comment type="miscellaneous">
    <text>In its host, LCK protein is inactivated, preventing T-cell transformation activity.</text>
</comment>
<dbReference type="EMBL" id="X99519">
    <property type="protein sequence ID" value="CAA67872.1"/>
    <property type="molecule type" value="Genomic_DNA"/>
</dbReference>
<dbReference type="SMR" id="P88825"/>
<dbReference type="GO" id="GO:0020002">
    <property type="term" value="C:host cell plasma membrane"/>
    <property type="evidence" value="ECO:0007669"/>
    <property type="project" value="UniProtKB-SubCell"/>
</dbReference>
<dbReference type="GO" id="GO:0016020">
    <property type="term" value="C:membrane"/>
    <property type="evidence" value="ECO:0007669"/>
    <property type="project" value="UniProtKB-KW"/>
</dbReference>
<dbReference type="GO" id="GO:0017124">
    <property type="term" value="F:SH3 domain binding"/>
    <property type="evidence" value="ECO:0007669"/>
    <property type="project" value="UniProtKB-KW"/>
</dbReference>
<organismHost>
    <name type="scientific">Saimiri sciureus</name>
    <name type="common">Common squirrel monkey</name>
    <dbReference type="NCBI Taxonomy" id="9521"/>
</organismHost>